<sequence>MSNIRPLHDRVVIRRVEEETKTAGGILLPGSAAEKPSQGEVIAVGNGQITDNGVRALDVKVGDKVLFGTYAGTTVKVNGEELLIMKESDILAVLEG</sequence>
<organism>
    <name type="scientific">Acinetobacter baumannii (strain SDF)</name>
    <dbReference type="NCBI Taxonomy" id="509170"/>
    <lineage>
        <taxon>Bacteria</taxon>
        <taxon>Pseudomonadati</taxon>
        <taxon>Pseudomonadota</taxon>
        <taxon>Gammaproteobacteria</taxon>
        <taxon>Moraxellales</taxon>
        <taxon>Moraxellaceae</taxon>
        <taxon>Acinetobacter</taxon>
        <taxon>Acinetobacter calcoaceticus/baumannii complex</taxon>
    </lineage>
</organism>
<protein>
    <recommendedName>
        <fullName evidence="1">Co-chaperonin GroES</fullName>
    </recommendedName>
    <alternativeName>
        <fullName evidence="1">10 kDa chaperonin</fullName>
    </alternativeName>
    <alternativeName>
        <fullName evidence="1">Chaperonin-10</fullName>
        <shortName evidence="1">Cpn10</shortName>
    </alternativeName>
</protein>
<gene>
    <name evidence="1" type="primary">groES</name>
    <name evidence="1" type="synonym">groS</name>
    <name type="ordered locus">ABSDF0817</name>
</gene>
<comment type="function">
    <text evidence="1">Together with the chaperonin GroEL, plays an essential role in assisting protein folding. The GroEL-GroES system forms a nano-cage that allows encapsulation of the non-native substrate proteins and provides a physical environment optimized to promote and accelerate protein folding. GroES binds to the apical surface of the GroEL ring, thereby capping the opening of the GroEL channel.</text>
</comment>
<comment type="subunit">
    <text evidence="1">Heptamer of 7 subunits arranged in a ring. Interacts with the chaperonin GroEL.</text>
</comment>
<comment type="subcellular location">
    <subcellularLocation>
        <location evidence="1">Cytoplasm</location>
    </subcellularLocation>
</comment>
<comment type="similarity">
    <text evidence="1">Belongs to the GroES chaperonin family.</text>
</comment>
<reference key="1">
    <citation type="journal article" date="2008" name="PLoS ONE">
        <title>Comparative analysis of Acinetobacters: three genomes for three lifestyles.</title>
        <authorList>
            <person name="Vallenet D."/>
            <person name="Nordmann P."/>
            <person name="Barbe V."/>
            <person name="Poirel L."/>
            <person name="Mangenot S."/>
            <person name="Bataille E."/>
            <person name="Dossat C."/>
            <person name="Gas S."/>
            <person name="Kreimeyer A."/>
            <person name="Lenoble P."/>
            <person name="Oztas S."/>
            <person name="Poulain J."/>
            <person name="Segurens B."/>
            <person name="Robert C."/>
            <person name="Abergel C."/>
            <person name="Claverie J.-M."/>
            <person name="Raoult D."/>
            <person name="Medigue C."/>
            <person name="Weissenbach J."/>
            <person name="Cruveiller S."/>
        </authorList>
    </citation>
    <scope>NUCLEOTIDE SEQUENCE [LARGE SCALE GENOMIC DNA]</scope>
    <source>
        <strain>SDF</strain>
    </source>
</reference>
<accession>B0VSP4</accession>
<dbReference type="EMBL" id="CU468230">
    <property type="protein sequence ID" value="CAP00184.1"/>
    <property type="molecule type" value="Genomic_DNA"/>
</dbReference>
<dbReference type="SMR" id="B0VSP4"/>
<dbReference type="KEGG" id="abm:ABSDF0817"/>
<dbReference type="HOGENOM" id="CLU_132825_2_0_6"/>
<dbReference type="Proteomes" id="UP000001741">
    <property type="component" value="Chromosome"/>
</dbReference>
<dbReference type="GO" id="GO:0005737">
    <property type="term" value="C:cytoplasm"/>
    <property type="evidence" value="ECO:0007669"/>
    <property type="project" value="UniProtKB-SubCell"/>
</dbReference>
<dbReference type="GO" id="GO:0005524">
    <property type="term" value="F:ATP binding"/>
    <property type="evidence" value="ECO:0007669"/>
    <property type="project" value="InterPro"/>
</dbReference>
<dbReference type="GO" id="GO:0046872">
    <property type="term" value="F:metal ion binding"/>
    <property type="evidence" value="ECO:0007669"/>
    <property type="project" value="TreeGrafter"/>
</dbReference>
<dbReference type="GO" id="GO:0044183">
    <property type="term" value="F:protein folding chaperone"/>
    <property type="evidence" value="ECO:0007669"/>
    <property type="project" value="InterPro"/>
</dbReference>
<dbReference type="GO" id="GO:0051087">
    <property type="term" value="F:protein-folding chaperone binding"/>
    <property type="evidence" value="ECO:0007669"/>
    <property type="project" value="TreeGrafter"/>
</dbReference>
<dbReference type="GO" id="GO:0051082">
    <property type="term" value="F:unfolded protein binding"/>
    <property type="evidence" value="ECO:0007669"/>
    <property type="project" value="TreeGrafter"/>
</dbReference>
<dbReference type="GO" id="GO:0051085">
    <property type="term" value="P:chaperone cofactor-dependent protein refolding"/>
    <property type="evidence" value="ECO:0007669"/>
    <property type="project" value="TreeGrafter"/>
</dbReference>
<dbReference type="CDD" id="cd00320">
    <property type="entry name" value="cpn10"/>
    <property type="match status" value="1"/>
</dbReference>
<dbReference type="FunFam" id="2.30.33.40:FF:000001">
    <property type="entry name" value="10 kDa chaperonin"/>
    <property type="match status" value="1"/>
</dbReference>
<dbReference type="Gene3D" id="2.30.33.40">
    <property type="entry name" value="GroES chaperonin"/>
    <property type="match status" value="1"/>
</dbReference>
<dbReference type="HAMAP" id="MF_00580">
    <property type="entry name" value="CH10"/>
    <property type="match status" value="1"/>
</dbReference>
<dbReference type="InterPro" id="IPR020818">
    <property type="entry name" value="Chaperonin_GroES"/>
</dbReference>
<dbReference type="InterPro" id="IPR037124">
    <property type="entry name" value="Chaperonin_GroES_sf"/>
</dbReference>
<dbReference type="InterPro" id="IPR018369">
    <property type="entry name" value="Chaprnonin_Cpn10_CS"/>
</dbReference>
<dbReference type="InterPro" id="IPR011032">
    <property type="entry name" value="GroES-like_sf"/>
</dbReference>
<dbReference type="NCBIfam" id="NF001527">
    <property type="entry name" value="PRK00364.1-2"/>
    <property type="match status" value="1"/>
</dbReference>
<dbReference type="NCBIfam" id="NF001529">
    <property type="entry name" value="PRK00364.1-5"/>
    <property type="match status" value="1"/>
</dbReference>
<dbReference type="NCBIfam" id="NF001531">
    <property type="entry name" value="PRK00364.2-2"/>
    <property type="match status" value="1"/>
</dbReference>
<dbReference type="NCBIfam" id="NF001533">
    <property type="entry name" value="PRK00364.2-4"/>
    <property type="match status" value="1"/>
</dbReference>
<dbReference type="PANTHER" id="PTHR10772">
    <property type="entry name" value="10 KDA HEAT SHOCK PROTEIN"/>
    <property type="match status" value="1"/>
</dbReference>
<dbReference type="PANTHER" id="PTHR10772:SF58">
    <property type="entry name" value="CO-CHAPERONIN GROES"/>
    <property type="match status" value="1"/>
</dbReference>
<dbReference type="Pfam" id="PF00166">
    <property type="entry name" value="Cpn10"/>
    <property type="match status" value="1"/>
</dbReference>
<dbReference type="PRINTS" id="PR00297">
    <property type="entry name" value="CHAPERONIN10"/>
</dbReference>
<dbReference type="SMART" id="SM00883">
    <property type="entry name" value="Cpn10"/>
    <property type="match status" value="1"/>
</dbReference>
<dbReference type="SUPFAM" id="SSF50129">
    <property type="entry name" value="GroES-like"/>
    <property type="match status" value="1"/>
</dbReference>
<dbReference type="PROSITE" id="PS00681">
    <property type="entry name" value="CHAPERONINS_CPN10"/>
    <property type="match status" value="1"/>
</dbReference>
<feature type="chain" id="PRO_1000129613" description="Co-chaperonin GroES">
    <location>
        <begin position="1"/>
        <end position="96"/>
    </location>
</feature>
<name>CH10_ACIBS</name>
<proteinExistence type="inferred from homology"/>
<evidence type="ECO:0000255" key="1">
    <source>
        <dbReference type="HAMAP-Rule" id="MF_00580"/>
    </source>
</evidence>
<keyword id="KW-0143">Chaperone</keyword>
<keyword id="KW-0963">Cytoplasm</keyword>